<sequence>MVLIKRYFIKKAMVQTQIDEYLAKRFYRAGYAGVQIIQFPLGTRVIIYAERPAMIIGRRGETIRQLAAIFEHEFGLSNPQITVRRVENPDLNARVVASRIAVLLERGAYYRRVANVMARRVLNAGAIGVQIVISGKLRTERARYEKVRRGKVYTTGHQVEYMVDRAVMHVTLKPGVLGIEVMIVKPAKPSDYVRIKQPEEVKEFIEQVRSELEKARAAEAAAAVAQQGEVVGEAPNTPLEEQGQKQG</sequence>
<evidence type="ECO:0000255" key="1">
    <source>
        <dbReference type="HAMAP-Rule" id="MF_01309"/>
    </source>
</evidence>
<evidence type="ECO:0000256" key="2">
    <source>
        <dbReference type="SAM" id="MobiDB-lite"/>
    </source>
</evidence>
<evidence type="ECO:0000305" key="3"/>
<dbReference type="EMBL" id="CP000493">
    <property type="protein sequence ID" value="ABM81136.1"/>
    <property type="molecule type" value="Genomic_DNA"/>
</dbReference>
<dbReference type="RefSeq" id="WP_011822454.1">
    <property type="nucleotide sequence ID" value="NC_008818.1"/>
</dbReference>
<dbReference type="SMR" id="A2BMC5"/>
<dbReference type="STRING" id="415426.Hbut_1306"/>
<dbReference type="EnsemblBacteria" id="ABM81136">
    <property type="protein sequence ID" value="ABM81136"/>
    <property type="gene ID" value="Hbut_1306"/>
</dbReference>
<dbReference type="GeneID" id="4781537"/>
<dbReference type="KEGG" id="hbu:Hbut_1306"/>
<dbReference type="eggNOG" id="arCOG04097">
    <property type="taxonomic scope" value="Archaea"/>
</dbReference>
<dbReference type="HOGENOM" id="CLU_058591_1_1_2"/>
<dbReference type="OrthoDB" id="9126at2157"/>
<dbReference type="Proteomes" id="UP000002593">
    <property type="component" value="Chromosome"/>
</dbReference>
<dbReference type="GO" id="GO:0022627">
    <property type="term" value="C:cytosolic small ribosomal subunit"/>
    <property type="evidence" value="ECO:0007669"/>
    <property type="project" value="TreeGrafter"/>
</dbReference>
<dbReference type="GO" id="GO:0019843">
    <property type="term" value="F:rRNA binding"/>
    <property type="evidence" value="ECO:0007669"/>
    <property type="project" value="UniProtKB-UniRule"/>
</dbReference>
<dbReference type="GO" id="GO:0003735">
    <property type="term" value="F:structural constituent of ribosome"/>
    <property type="evidence" value="ECO:0007669"/>
    <property type="project" value="InterPro"/>
</dbReference>
<dbReference type="GO" id="GO:0006412">
    <property type="term" value="P:translation"/>
    <property type="evidence" value="ECO:0007669"/>
    <property type="project" value="UniProtKB-UniRule"/>
</dbReference>
<dbReference type="CDD" id="cd02411">
    <property type="entry name" value="KH-II_30S_S3_arch"/>
    <property type="match status" value="1"/>
</dbReference>
<dbReference type="FunFam" id="3.30.300.20:FF:000001">
    <property type="entry name" value="30S ribosomal protein S3"/>
    <property type="match status" value="1"/>
</dbReference>
<dbReference type="Gene3D" id="3.30.300.20">
    <property type="match status" value="1"/>
</dbReference>
<dbReference type="Gene3D" id="3.30.1140.32">
    <property type="entry name" value="Ribosomal protein S3, C-terminal domain"/>
    <property type="match status" value="1"/>
</dbReference>
<dbReference type="HAMAP" id="MF_01309_A">
    <property type="entry name" value="Ribosomal_uS3_A"/>
    <property type="match status" value="1"/>
</dbReference>
<dbReference type="InterPro" id="IPR004087">
    <property type="entry name" value="KH_dom"/>
</dbReference>
<dbReference type="InterPro" id="IPR015946">
    <property type="entry name" value="KH_dom-like_a/b"/>
</dbReference>
<dbReference type="InterPro" id="IPR004044">
    <property type="entry name" value="KH_dom_type_2"/>
</dbReference>
<dbReference type="InterPro" id="IPR009019">
    <property type="entry name" value="KH_sf_prok-type"/>
</dbReference>
<dbReference type="InterPro" id="IPR036419">
    <property type="entry name" value="Ribosomal_S3_C_sf"/>
</dbReference>
<dbReference type="InterPro" id="IPR027488">
    <property type="entry name" value="Ribosomal_uS3_arc"/>
</dbReference>
<dbReference type="InterPro" id="IPR001351">
    <property type="entry name" value="Ribosomal_uS3_C"/>
</dbReference>
<dbReference type="InterPro" id="IPR005703">
    <property type="entry name" value="Ribosomal_uS3_euk/arc"/>
</dbReference>
<dbReference type="NCBIfam" id="NF003219">
    <property type="entry name" value="PRK04191.1"/>
    <property type="match status" value="1"/>
</dbReference>
<dbReference type="NCBIfam" id="TIGR01008">
    <property type="entry name" value="uS3_euk_arch"/>
    <property type="match status" value="1"/>
</dbReference>
<dbReference type="PANTHER" id="PTHR11760">
    <property type="entry name" value="30S/40S RIBOSOMAL PROTEIN S3"/>
    <property type="match status" value="1"/>
</dbReference>
<dbReference type="PANTHER" id="PTHR11760:SF32">
    <property type="entry name" value="SMALL RIBOSOMAL SUBUNIT PROTEIN US3"/>
    <property type="match status" value="1"/>
</dbReference>
<dbReference type="Pfam" id="PF07650">
    <property type="entry name" value="KH_2"/>
    <property type="match status" value="1"/>
</dbReference>
<dbReference type="Pfam" id="PF00189">
    <property type="entry name" value="Ribosomal_S3_C"/>
    <property type="match status" value="1"/>
</dbReference>
<dbReference type="SMART" id="SM00322">
    <property type="entry name" value="KH"/>
    <property type="match status" value="1"/>
</dbReference>
<dbReference type="SUPFAM" id="SSF54814">
    <property type="entry name" value="Prokaryotic type KH domain (KH-domain type II)"/>
    <property type="match status" value="1"/>
</dbReference>
<dbReference type="SUPFAM" id="SSF54821">
    <property type="entry name" value="Ribosomal protein S3 C-terminal domain"/>
    <property type="match status" value="1"/>
</dbReference>
<dbReference type="PROSITE" id="PS50823">
    <property type="entry name" value="KH_TYPE_2"/>
    <property type="match status" value="1"/>
</dbReference>
<accession>A2BMC5</accession>
<keyword id="KW-1185">Reference proteome</keyword>
<keyword id="KW-0687">Ribonucleoprotein</keyword>
<keyword id="KW-0689">Ribosomal protein</keyword>
<keyword id="KW-0694">RNA-binding</keyword>
<keyword id="KW-0699">rRNA-binding</keyword>
<protein>
    <recommendedName>
        <fullName evidence="1">Small ribosomal subunit protein uS3</fullName>
    </recommendedName>
    <alternativeName>
        <fullName evidence="3">30S ribosomal protein S3</fullName>
    </alternativeName>
</protein>
<name>RS3_HYPBU</name>
<feature type="chain" id="PRO_0000293921" description="Small ribosomal subunit protein uS3">
    <location>
        <begin position="1"/>
        <end position="247"/>
    </location>
</feature>
<feature type="domain" description="KH type-2" evidence="1">
    <location>
        <begin position="18"/>
        <end position="87"/>
    </location>
</feature>
<feature type="region of interest" description="Disordered" evidence="2">
    <location>
        <begin position="226"/>
        <end position="247"/>
    </location>
</feature>
<proteinExistence type="inferred from homology"/>
<organism>
    <name type="scientific">Hyperthermus butylicus (strain DSM 5456 / JCM 9403 / PLM1-5)</name>
    <dbReference type="NCBI Taxonomy" id="415426"/>
    <lineage>
        <taxon>Archaea</taxon>
        <taxon>Thermoproteota</taxon>
        <taxon>Thermoprotei</taxon>
        <taxon>Desulfurococcales</taxon>
        <taxon>Pyrodictiaceae</taxon>
        <taxon>Hyperthermus</taxon>
    </lineage>
</organism>
<comment type="function">
    <text evidence="1">Binds the lower part of the 30S subunit head.</text>
</comment>
<comment type="subunit">
    <text evidence="1">Part of the 30S ribosomal subunit.</text>
</comment>
<comment type="similarity">
    <text evidence="1">Belongs to the universal ribosomal protein uS3 family.</text>
</comment>
<reference key="1">
    <citation type="journal article" date="2007" name="Archaea">
        <title>The genome of Hyperthermus butylicus: a sulfur-reducing, peptide fermenting, neutrophilic Crenarchaeote growing up to 108 degrees C.</title>
        <authorList>
            <person name="Bruegger K."/>
            <person name="Chen L."/>
            <person name="Stark M."/>
            <person name="Zibat A."/>
            <person name="Redder P."/>
            <person name="Ruepp A."/>
            <person name="Awayez M."/>
            <person name="She Q."/>
            <person name="Garrett R.A."/>
            <person name="Klenk H.-P."/>
        </authorList>
    </citation>
    <scope>NUCLEOTIDE SEQUENCE [LARGE SCALE GENOMIC DNA]</scope>
    <source>
        <strain>DSM 5456 / JCM 9403 / PLM1-5</strain>
    </source>
</reference>
<gene>
    <name evidence="1" type="primary">rps3</name>
    <name type="ordered locus">Hbut_1306</name>
</gene>